<comment type="function">
    <text evidence="1">Specifically dimethylates two adjacent adenosines (A1518 and A1519) in the loop of a conserved hairpin near the 3'-end of 16S rRNA in the 30S particle. May play a critical role in biogenesis of 30S subunits.</text>
</comment>
<comment type="catalytic activity">
    <reaction evidence="1">
        <text>adenosine(1518)/adenosine(1519) in 16S rRNA + 4 S-adenosyl-L-methionine = N(6)-dimethyladenosine(1518)/N(6)-dimethyladenosine(1519) in 16S rRNA + 4 S-adenosyl-L-homocysteine + 4 H(+)</text>
        <dbReference type="Rhea" id="RHEA:19609"/>
        <dbReference type="Rhea" id="RHEA-COMP:10232"/>
        <dbReference type="Rhea" id="RHEA-COMP:10233"/>
        <dbReference type="ChEBI" id="CHEBI:15378"/>
        <dbReference type="ChEBI" id="CHEBI:57856"/>
        <dbReference type="ChEBI" id="CHEBI:59789"/>
        <dbReference type="ChEBI" id="CHEBI:74411"/>
        <dbReference type="ChEBI" id="CHEBI:74493"/>
        <dbReference type="EC" id="2.1.1.182"/>
    </reaction>
</comment>
<comment type="subcellular location">
    <subcellularLocation>
        <location evidence="1">Cytoplasm</location>
    </subcellularLocation>
</comment>
<comment type="similarity">
    <text evidence="1">Belongs to the class I-like SAM-binding methyltransferase superfamily. rRNA adenine N(6)-methyltransferase family. RsmA subfamily.</text>
</comment>
<dbReference type="EC" id="2.1.1.182" evidence="1"/>
<dbReference type="EMBL" id="CP001032">
    <property type="protein sequence ID" value="ACB76832.1"/>
    <property type="molecule type" value="Genomic_DNA"/>
</dbReference>
<dbReference type="RefSeq" id="WP_012376361.1">
    <property type="nucleotide sequence ID" value="NC_010571.1"/>
</dbReference>
<dbReference type="SMR" id="B1ZW80"/>
<dbReference type="STRING" id="452637.Oter_3555"/>
<dbReference type="KEGG" id="ote:Oter_3555"/>
<dbReference type="eggNOG" id="COG0030">
    <property type="taxonomic scope" value="Bacteria"/>
</dbReference>
<dbReference type="HOGENOM" id="CLU_041220_1_1_0"/>
<dbReference type="OrthoDB" id="9814755at2"/>
<dbReference type="Proteomes" id="UP000007013">
    <property type="component" value="Chromosome"/>
</dbReference>
<dbReference type="GO" id="GO:0005829">
    <property type="term" value="C:cytosol"/>
    <property type="evidence" value="ECO:0007669"/>
    <property type="project" value="TreeGrafter"/>
</dbReference>
<dbReference type="GO" id="GO:0052908">
    <property type="term" value="F:16S rRNA (adenine(1518)-N(6)/adenine(1519)-N(6))-dimethyltransferase activity"/>
    <property type="evidence" value="ECO:0007669"/>
    <property type="project" value="UniProtKB-EC"/>
</dbReference>
<dbReference type="GO" id="GO:0003723">
    <property type="term" value="F:RNA binding"/>
    <property type="evidence" value="ECO:0007669"/>
    <property type="project" value="UniProtKB-KW"/>
</dbReference>
<dbReference type="Gene3D" id="1.10.8.100">
    <property type="entry name" value="Ribosomal RNA adenine dimethylase-like, domain 2"/>
    <property type="match status" value="1"/>
</dbReference>
<dbReference type="Gene3D" id="3.40.50.150">
    <property type="entry name" value="Vaccinia Virus protein VP39"/>
    <property type="match status" value="1"/>
</dbReference>
<dbReference type="HAMAP" id="MF_00607">
    <property type="entry name" value="16SrRNA_methyltr_A"/>
    <property type="match status" value="1"/>
</dbReference>
<dbReference type="InterPro" id="IPR001737">
    <property type="entry name" value="KsgA/Erm"/>
</dbReference>
<dbReference type="InterPro" id="IPR023165">
    <property type="entry name" value="rRNA_Ade_diMease-like_C"/>
</dbReference>
<dbReference type="InterPro" id="IPR020596">
    <property type="entry name" value="rRNA_Ade_Mease_Trfase_CS"/>
</dbReference>
<dbReference type="InterPro" id="IPR020598">
    <property type="entry name" value="rRNA_Ade_methylase_Trfase_N"/>
</dbReference>
<dbReference type="InterPro" id="IPR011530">
    <property type="entry name" value="rRNA_adenine_dimethylase"/>
</dbReference>
<dbReference type="InterPro" id="IPR029063">
    <property type="entry name" value="SAM-dependent_MTases_sf"/>
</dbReference>
<dbReference type="NCBIfam" id="TIGR00755">
    <property type="entry name" value="ksgA"/>
    <property type="match status" value="1"/>
</dbReference>
<dbReference type="PANTHER" id="PTHR11727">
    <property type="entry name" value="DIMETHYLADENOSINE TRANSFERASE"/>
    <property type="match status" value="1"/>
</dbReference>
<dbReference type="PANTHER" id="PTHR11727:SF7">
    <property type="entry name" value="DIMETHYLADENOSINE TRANSFERASE-RELATED"/>
    <property type="match status" value="1"/>
</dbReference>
<dbReference type="Pfam" id="PF00398">
    <property type="entry name" value="RrnaAD"/>
    <property type="match status" value="1"/>
</dbReference>
<dbReference type="SMART" id="SM00650">
    <property type="entry name" value="rADc"/>
    <property type="match status" value="1"/>
</dbReference>
<dbReference type="SUPFAM" id="SSF53335">
    <property type="entry name" value="S-adenosyl-L-methionine-dependent methyltransferases"/>
    <property type="match status" value="1"/>
</dbReference>
<dbReference type="PROSITE" id="PS01131">
    <property type="entry name" value="RRNA_A_DIMETH"/>
    <property type="match status" value="1"/>
</dbReference>
<dbReference type="PROSITE" id="PS51689">
    <property type="entry name" value="SAM_RNA_A_N6_MT"/>
    <property type="match status" value="1"/>
</dbReference>
<keyword id="KW-0963">Cytoplasm</keyword>
<keyword id="KW-0489">Methyltransferase</keyword>
<keyword id="KW-1185">Reference proteome</keyword>
<keyword id="KW-0694">RNA-binding</keyword>
<keyword id="KW-0698">rRNA processing</keyword>
<keyword id="KW-0949">S-adenosyl-L-methionine</keyword>
<keyword id="KW-0808">Transferase</keyword>
<proteinExistence type="inferred from homology"/>
<organism>
    <name type="scientific">Opitutus terrae (strain DSM 11246 / JCM 15787 / PB90-1)</name>
    <dbReference type="NCBI Taxonomy" id="452637"/>
    <lineage>
        <taxon>Bacteria</taxon>
        <taxon>Pseudomonadati</taxon>
        <taxon>Verrucomicrobiota</taxon>
        <taxon>Opitutia</taxon>
        <taxon>Opitutales</taxon>
        <taxon>Opitutaceae</taxon>
        <taxon>Opitutus</taxon>
    </lineage>
</organism>
<sequence length="277" mass="30395">MPLTPTATRELLAQLGHQPKRFLGQNFLVDGNIVRKSLELAQVRRGDAVVEIGPGLGTLTGALLEAGAEVWAVEKDRTLHAHLSSTLQPRHPDTFHLLEADAVEHPLADLPAAHAAAFKIVANLPYAIATPWLDAVLGGPLPERMVLMLQQEAAQRYVAMPGSKSFGAISVFLQSAYEVAPGHRVEASCFFPRPDVDSYLLHLVRRAEPFVFTPEVKALIRSVFQQRRKQIGGLLRDRLPDHGASWLARLTAAGLSSLTRPEAIPTELWRALQVRES</sequence>
<protein>
    <recommendedName>
        <fullName evidence="1">Ribosomal RNA small subunit methyltransferase A</fullName>
        <ecNumber evidence="1">2.1.1.182</ecNumber>
    </recommendedName>
    <alternativeName>
        <fullName evidence="1">16S rRNA (adenine(1518)-N(6)/adenine(1519)-N(6))-dimethyltransferase</fullName>
    </alternativeName>
    <alternativeName>
        <fullName evidence="1">16S rRNA dimethyladenosine transferase</fullName>
    </alternativeName>
    <alternativeName>
        <fullName evidence="1">16S rRNA dimethylase</fullName>
    </alternativeName>
    <alternativeName>
        <fullName evidence="1">S-adenosylmethionine-6-N', N'-adenosyl(rRNA) dimethyltransferase</fullName>
    </alternativeName>
</protein>
<name>RSMA_OPITP</name>
<reference key="1">
    <citation type="journal article" date="2011" name="J. Bacteriol.">
        <title>Genome sequence of the verrucomicrobium Opitutus terrae PB90-1, an abundant inhabitant of rice paddy soil ecosystems.</title>
        <authorList>
            <person name="van Passel M.W."/>
            <person name="Kant R."/>
            <person name="Palva A."/>
            <person name="Copeland A."/>
            <person name="Lucas S."/>
            <person name="Lapidus A."/>
            <person name="Glavina del Rio T."/>
            <person name="Pitluck S."/>
            <person name="Goltsman E."/>
            <person name="Clum A."/>
            <person name="Sun H."/>
            <person name="Schmutz J."/>
            <person name="Larimer F.W."/>
            <person name="Land M.L."/>
            <person name="Hauser L."/>
            <person name="Kyrpides N."/>
            <person name="Mikhailova N."/>
            <person name="Richardson P.P."/>
            <person name="Janssen P.H."/>
            <person name="de Vos W.M."/>
            <person name="Smidt H."/>
        </authorList>
    </citation>
    <scope>NUCLEOTIDE SEQUENCE [LARGE SCALE GENOMIC DNA]</scope>
    <source>
        <strain>DSM 11246 / JCM 15787 / PB90-1</strain>
    </source>
</reference>
<accession>B1ZW80</accession>
<gene>
    <name evidence="1" type="primary">rsmA</name>
    <name evidence="1" type="synonym">ksgA</name>
    <name type="ordered locus">Oter_3555</name>
</gene>
<feature type="chain" id="PRO_1000194392" description="Ribosomal RNA small subunit methyltransferase A">
    <location>
        <begin position="1"/>
        <end position="277"/>
    </location>
</feature>
<feature type="binding site" evidence="1">
    <location>
        <position position="26"/>
    </location>
    <ligand>
        <name>S-adenosyl-L-methionine</name>
        <dbReference type="ChEBI" id="CHEBI:59789"/>
    </ligand>
</feature>
<feature type="binding site" evidence="1">
    <location>
        <position position="28"/>
    </location>
    <ligand>
        <name>S-adenosyl-L-methionine</name>
        <dbReference type="ChEBI" id="CHEBI:59789"/>
    </ligand>
</feature>
<feature type="binding site" evidence="1">
    <location>
        <position position="53"/>
    </location>
    <ligand>
        <name>S-adenosyl-L-methionine</name>
        <dbReference type="ChEBI" id="CHEBI:59789"/>
    </ligand>
</feature>
<feature type="binding site" evidence="1">
    <location>
        <position position="74"/>
    </location>
    <ligand>
        <name>S-adenosyl-L-methionine</name>
        <dbReference type="ChEBI" id="CHEBI:59789"/>
    </ligand>
</feature>
<feature type="binding site" evidence="1">
    <location>
        <position position="101"/>
    </location>
    <ligand>
        <name>S-adenosyl-L-methionine</name>
        <dbReference type="ChEBI" id="CHEBI:59789"/>
    </ligand>
</feature>
<feature type="binding site" evidence="1">
    <location>
        <position position="123"/>
    </location>
    <ligand>
        <name>S-adenosyl-L-methionine</name>
        <dbReference type="ChEBI" id="CHEBI:59789"/>
    </ligand>
</feature>
<evidence type="ECO:0000255" key="1">
    <source>
        <dbReference type="HAMAP-Rule" id="MF_00607"/>
    </source>
</evidence>